<gene>
    <name evidence="1" type="primary">hutI</name>
    <name type="ordered locus">Bmul_1102</name>
    <name type="ordered locus">BMULJ_02154</name>
</gene>
<reference key="1">
    <citation type="submission" date="2007-10" db="EMBL/GenBank/DDBJ databases">
        <title>Complete sequence of chromosome 1 of Burkholderia multivorans ATCC 17616.</title>
        <authorList>
            <person name="Copeland A."/>
            <person name="Lucas S."/>
            <person name="Lapidus A."/>
            <person name="Barry K."/>
            <person name="Glavina del Rio T."/>
            <person name="Dalin E."/>
            <person name="Tice H."/>
            <person name="Pitluck S."/>
            <person name="Chain P."/>
            <person name="Malfatti S."/>
            <person name="Shin M."/>
            <person name="Vergez L."/>
            <person name="Schmutz J."/>
            <person name="Larimer F."/>
            <person name="Land M."/>
            <person name="Hauser L."/>
            <person name="Kyrpides N."/>
            <person name="Kim E."/>
            <person name="Tiedje J."/>
            <person name="Richardson P."/>
        </authorList>
    </citation>
    <scope>NUCLEOTIDE SEQUENCE [LARGE SCALE GENOMIC DNA]</scope>
    <source>
        <strain>ATCC 17616 / 249</strain>
    </source>
</reference>
<reference key="2">
    <citation type="submission" date="2007-04" db="EMBL/GenBank/DDBJ databases">
        <title>Complete genome sequence of Burkholderia multivorans ATCC 17616.</title>
        <authorList>
            <person name="Ohtsubo Y."/>
            <person name="Yamashita A."/>
            <person name="Kurokawa K."/>
            <person name="Takami H."/>
            <person name="Yuhara S."/>
            <person name="Nishiyama E."/>
            <person name="Endo R."/>
            <person name="Miyazaki R."/>
            <person name="Ono A."/>
            <person name="Yano K."/>
            <person name="Ito M."/>
            <person name="Sota M."/>
            <person name="Yuji N."/>
            <person name="Hattori M."/>
            <person name="Tsuda M."/>
        </authorList>
    </citation>
    <scope>NUCLEOTIDE SEQUENCE [LARGE SCALE GENOMIC DNA]</scope>
    <source>
        <strain>ATCC 17616 / 249</strain>
    </source>
</reference>
<accession>A9AGQ1</accession>
<sequence>MKPTVWHHLRLCPHGHPDETIDDAAIAVDETGAIVWLGACAALPHGYAHWRREDLHGAWVTPGLVDCHTHLVYGGTRADEFAQRLAGVSYEEIARQGGGIVSTVRATRAADETALFVQAAARLQPLLAEGVTAIEIKSGYGLDLASERKMLRVARQLGERFPVSVYTTFLGAHALPPEYAGRADAYIDEICERMLPTLADEGLIDAVDVFCERIGFSLAQTERVFEAATRRGLPVKLHAEQLSDAGGTALAARYHALSADHLEFLDEAGIEAMKAAGTVAVLLPGAYYFIRETQLPPIDLLRRHGVPIALATDHNPGTSPLESLLLTMNLGCTLFRMTVPEVLQGVTRHAAAALGRADRHGALEVGRQADFAVWSVGSLAELAYWIGRPLCEQVVRGGTTVFRRMIG</sequence>
<evidence type="ECO:0000255" key="1">
    <source>
        <dbReference type="HAMAP-Rule" id="MF_00372"/>
    </source>
</evidence>
<dbReference type="EC" id="3.5.2.7" evidence="1"/>
<dbReference type="EMBL" id="CP000868">
    <property type="protein sequence ID" value="ABX14792.1"/>
    <property type="molecule type" value="Genomic_DNA"/>
</dbReference>
<dbReference type="EMBL" id="AP009385">
    <property type="protein sequence ID" value="BAG44058.1"/>
    <property type="molecule type" value="Genomic_DNA"/>
</dbReference>
<dbReference type="RefSeq" id="WP_012213048.1">
    <property type="nucleotide sequence ID" value="NC_010084.1"/>
</dbReference>
<dbReference type="SMR" id="A9AGQ1"/>
<dbReference type="STRING" id="395019.BMULJ_02154"/>
<dbReference type="KEGG" id="bmj:BMULJ_02154"/>
<dbReference type="KEGG" id="bmu:Bmul_1102"/>
<dbReference type="eggNOG" id="COG1228">
    <property type="taxonomic scope" value="Bacteria"/>
</dbReference>
<dbReference type="HOGENOM" id="CLU_041647_0_0_4"/>
<dbReference type="UniPathway" id="UPA00379">
    <property type="reaction ID" value="UER00551"/>
</dbReference>
<dbReference type="Proteomes" id="UP000008815">
    <property type="component" value="Chromosome 1"/>
</dbReference>
<dbReference type="GO" id="GO:0005737">
    <property type="term" value="C:cytoplasm"/>
    <property type="evidence" value="ECO:0007669"/>
    <property type="project" value="UniProtKB-SubCell"/>
</dbReference>
<dbReference type="GO" id="GO:0050480">
    <property type="term" value="F:imidazolonepropionase activity"/>
    <property type="evidence" value="ECO:0007669"/>
    <property type="project" value="UniProtKB-UniRule"/>
</dbReference>
<dbReference type="GO" id="GO:0005506">
    <property type="term" value="F:iron ion binding"/>
    <property type="evidence" value="ECO:0007669"/>
    <property type="project" value="UniProtKB-UniRule"/>
</dbReference>
<dbReference type="GO" id="GO:0008270">
    <property type="term" value="F:zinc ion binding"/>
    <property type="evidence" value="ECO:0007669"/>
    <property type="project" value="UniProtKB-UniRule"/>
</dbReference>
<dbReference type="GO" id="GO:0019556">
    <property type="term" value="P:L-histidine catabolic process to glutamate and formamide"/>
    <property type="evidence" value="ECO:0007669"/>
    <property type="project" value="UniProtKB-UniPathway"/>
</dbReference>
<dbReference type="GO" id="GO:0019557">
    <property type="term" value="P:L-histidine catabolic process to glutamate and formate"/>
    <property type="evidence" value="ECO:0007669"/>
    <property type="project" value="UniProtKB-UniPathway"/>
</dbReference>
<dbReference type="CDD" id="cd01296">
    <property type="entry name" value="Imidazolone-5PH"/>
    <property type="match status" value="1"/>
</dbReference>
<dbReference type="FunFam" id="3.20.20.140:FF:000007">
    <property type="entry name" value="Imidazolonepropionase"/>
    <property type="match status" value="1"/>
</dbReference>
<dbReference type="Gene3D" id="3.20.20.140">
    <property type="entry name" value="Metal-dependent hydrolases"/>
    <property type="match status" value="1"/>
</dbReference>
<dbReference type="Gene3D" id="2.30.40.10">
    <property type="entry name" value="Urease, subunit C, domain 1"/>
    <property type="match status" value="1"/>
</dbReference>
<dbReference type="HAMAP" id="MF_00372">
    <property type="entry name" value="HutI"/>
    <property type="match status" value="1"/>
</dbReference>
<dbReference type="InterPro" id="IPR006680">
    <property type="entry name" value="Amidohydro-rel"/>
</dbReference>
<dbReference type="InterPro" id="IPR005920">
    <property type="entry name" value="HutI"/>
</dbReference>
<dbReference type="InterPro" id="IPR011059">
    <property type="entry name" value="Metal-dep_hydrolase_composite"/>
</dbReference>
<dbReference type="InterPro" id="IPR032466">
    <property type="entry name" value="Metal_Hydrolase"/>
</dbReference>
<dbReference type="NCBIfam" id="TIGR01224">
    <property type="entry name" value="hutI"/>
    <property type="match status" value="1"/>
</dbReference>
<dbReference type="PANTHER" id="PTHR42752">
    <property type="entry name" value="IMIDAZOLONEPROPIONASE"/>
    <property type="match status" value="1"/>
</dbReference>
<dbReference type="PANTHER" id="PTHR42752:SF1">
    <property type="entry name" value="IMIDAZOLONEPROPIONASE-RELATED"/>
    <property type="match status" value="1"/>
</dbReference>
<dbReference type="Pfam" id="PF01979">
    <property type="entry name" value="Amidohydro_1"/>
    <property type="match status" value="1"/>
</dbReference>
<dbReference type="SUPFAM" id="SSF51338">
    <property type="entry name" value="Composite domain of metallo-dependent hydrolases"/>
    <property type="match status" value="1"/>
</dbReference>
<dbReference type="SUPFAM" id="SSF51556">
    <property type="entry name" value="Metallo-dependent hydrolases"/>
    <property type="match status" value="1"/>
</dbReference>
<proteinExistence type="inferred from homology"/>
<feature type="chain" id="PRO_1000121538" description="Imidazolonepropionase">
    <location>
        <begin position="1"/>
        <end position="407"/>
    </location>
</feature>
<feature type="binding site" evidence="1">
    <location>
        <position position="68"/>
    </location>
    <ligand>
        <name>Fe(3+)</name>
        <dbReference type="ChEBI" id="CHEBI:29034"/>
    </ligand>
</feature>
<feature type="binding site" evidence="1">
    <location>
        <position position="68"/>
    </location>
    <ligand>
        <name>Zn(2+)</name>
        <dbReference type="ChEBI" id="CHEBI:29105"/>
    </ligand>
</feature>
<feature type="binding site" evidence="1">
    <location>
        <position position="70"/>
    </location>
    <ligand>
        <name>Fe(3+)</name>
        <dbReference type="ChEBI" id="CHEBI:29034"/>
    </ligand>
</feature>
<feature type="binding site" evidence="1">
    <location>
        <position position="70"/>
    </location>
    <ligand>
        <name>Zn(2+)</name>
        <dbReference type="ChEBI" id="CHEBI:29105"/>
    </ligand>
</feature>
<feature type="binding site" evidence="1">
    <location>
        <position position="77"/>
    </location>
    <ligand>
        <name>4-imidazolone-5-propanoate</name>
        <dbReference type="ChEBI" id="CHEBI:77893"/>
    </ligand>
</feature>
<feature type="binding site" evidence="1">
    <location>
        <position position="140"/>
    </location>
    <ligand>
        <name>4-imidazolone-5-propanoate</name>
        <dbReference type="ChEBI" id="CHEBI:77893"/>
    </ligand>
</feature>
<feature type="binding site" evidence="1">
    <location>
        <position position="140"/>
    </location>
    <ligand>
        <name>N-formimidoyl-L-glutamate</name>
        <dbReference type="ChEBI" id="CHEBI:58928"/>
    </ligand>
</feature>
<feature type="binding site" evidence="1">
    <location>
        <position position="173"/>
    </location>
    <ligand>
        <name>4-imidazolone-5-propanoate</name>
        <dbReference type="ChEBI" id="CHEBI:77893"/>
    </ligand>
</feature>
<feature type="binding site" evidence="1">
    <location>
        <position position="238"/>
    </location>
    <ligand>
        <name>Fe(3+)</name>
        <dbReference type="ChEBI" id="CHEBI:29034"/>
    </ligand>
</feature>
<feature type="binding site" evidence="1">
    <location>
        <position position="238"/>
    </location>
    <ligand>
        <name>Zn(2+)</name>
        <dbReference type="ChEBI" id="CHEBI:29105"/>
    </ligand>
</feature>
<feature type="binding site" evidence="1">
    <location>
        <position position="241"/>
    </location>
    <ligand>
        <name>4-imidazolone-5-propanoate</name>
        <dbReference type="ChEBI" id="CHEBI:77893"/>
    </ligand>
</feature>
<feature type="binding site" evidence="1">
    <location>
        <position position="313"/>
    </location>
    <ligand>
        <name>Fe(3+)</name>
        <dbReference type="ChEBI" id="CHEBI:29034"/>
    </ligand>
</feature>
<feature type="binding site" evidence="1">
    <location>
        <position position="313"/>
    </location>
    <ligand>
        <name>Zn(2+)</name>
        <dbReference type="ChEBI" id="CHEBI:29105"/>
    </ligand>
</feature>
<feature type="binding site" evidence="1">
    <location>
        <position position="315"/>
    </location>
    <ligand>
        <name>N-formimidoyl-L-glutamate</name>
        <dbReference type="ChEBI" id="CHEBI:58928"/>
    </ligand>
</feature>
<feature type="binding site" evidence="1">
    <location>
        <position position="317"/>
    </location>
    <ligand>
        <name>N-formimidoyl-L-glutamate</name>
        <dbReference type="ChEBI" id="CHEBI:58928"/>
    </ligand>
</feature>
<feature type="binding site" evidence="1">
    <location>
        <position position="318"/>
    </location>
    <ligand>
        <name>4-imidazolone-5-propanoate</name>
        <dbReference type="ChEBI" id="CHEBI:77893"/>
    </ligand>
</feature>
<protein>
    <recommendedName>
        <fullName evidence="1">Imidazolonepropionase</fullName>
        <ecNumber evidence="1">3.5.2.7</ecNumber>
    </recommendedName>
    <alternativeName>
        <fullName evidence="1">Imidazolone-5-propionate hydrolase</fullName>
    </alternativeName>
</protein>
<organism>
    <name type="scientific">Burkholderia multivorans (strain ATCC 17616 / 249)</name>
    <dbReference type="NCBI Taxonomy" id="395019"/>
    <lineage>
        <taxon>Bacteria</taxon>
        <taxon>Pseudomonadati</taxon>
        <taxon>Pseudomonadota</taxon>
        <taxon>Betaproteobacteria</taxon>
        <taxon>Burkholderiales</taxon>
        <taxon>Burkholderiaceae</taxon>
        <taxon>Burkholderia</taxon>
        <taxon>Burkholderia cepacia complex</taxon>
    </lineage>
</organism>
<comment type="function">
    <text evidence="1">Catalyzes the hydrolytic cleavage of the carbon-nitrogen bond in imidazolone-5-propanoate to yield N-formimidoyl-L-glutamate. It is the third step in the universal histidine degradation pathway.</text>
</comment>
<comment type="catalytic activity">
    <reaction evidence="1">
        <text>4-imidazolone-5-propanoate + H2O = N-formimidoyl-L-glutamate</text>
        <dbReference type="Rhea" id="RHEA:23660"/>
        <dbReference type="ChEBI" id="CHEBI:15377"/>
        <dbReference type="ChEBI" id="CHEBI:58928"/>
        <dbReference type="ChEBI" id="CHEBI:77893"/>
        <dbReference type="EC" id="3.5.2.7"/>
    </reaction>
</comment>
<comment type="cofactor">
    <cofactor evidence="1">
        <name>Zn(2+)</name>
        <dbReference type="ChEBI" id="CHEBI:29105"/>
    </cofactor>
    <cofactor evidence="1">
        <name>Fe(3+)</name>
        <dbReference type="ChEBI" id="CHEBI:29034"/>
    </cofactor>
    <text evidence="1">Binds 1 zinc or iron ion per subunit.</text>
</comment>
<comment type="pathway">
    <text evidence="1">Amino-acid degradation; L-histidine degradation into L-glutamate; N-formimidoyl-L-glutamate from L-histidine: step 3/3.</text>
</comment>
<comment type="subcellular location">
    <subcellularLocation>
        <location evidence="1">Cytoplasm</location>
    </subcellularLocation>
</comment>
<comment type="similarity">
    <text evidence="1">Belongs to the metallo-dependent hydrolases superfamily. HutI family.</text>
</comment>
<name>HUTI_BURM1</name>
<keyword id="KW-0963">Cytoplasm</keyword>
<keyword id="KW-0369">Histidine metabolism</keyword>
<keyword id="KW-0378">Hydrolase</keyword>
<keyword id="KW-0408">Iron</keyword>
<keyword id="KW-0479">Metal-binding</keyword>
<keyword id="KW-1185">Reference proteome</keyword>
<keyword id="KW-0862">Zinc</keyword>